<organism>
    <name type="scientific">Escherichia coli O6:K15:H31 (strain 536 / UPEC)</name>
    <dbReference type="NCBI Taxonomy" id="362663"/>
    <lineage>
        <taxon>Bacteria</taxon>
        <taxon>Pseudomonadati</taxon>
        <taxon>Pseudomonadota</taxon>
        <taxon>Gammaproteobacteria</taxon>
        <taxon>Enterobacterales</taxon>
        <taxon>Enterobacteriaceae</taxon>
        <taxon>Escherichia</taxon>
    </lineage>
</organism>
<reference key="1">
    <citation type="journal article" date="2006" name="Mol. Microbiol.">
        <title>Role of pathogenicity island-associated integrases in the genome plasticity of uropathogenic Escherichia coli strain 536.</title>
        <authorList>
            <person name="Hochhut B."/>
            <person name="Wilde C."/>
            <person name="Balling G."/>
            <person name="Middendorf B."/>
            <person name="Dobrindt U."/>
            <person name="Brzuszkiewicz E."/>
            <person name="Gottschalk G."/>
            <person name="Carniel E."/>
            <person name="Hacker J."/>
        </authorList>
    </citation>
    <scope>NUCLEOTIDE SEQUENCE [LARGE SCALE GENOMIC DNA]</scope>
    <source>
        <strain>536 / UPEC</strain>
    </source>
</reference>
<evidence type="ECO:0000255" key="1">
    <source>
        <dbReference type="HAMAP-Rule" id="MF_01449"/>
    </source>
</evidence>
<feature type="chain" id="PRO_0000309245" description="HTH-type transcriptional regulator SgrR">
    <location>
        <begin position="1"/>
        <end position="551"/>
    </location>
</feature>
<feature type="domain" description="HTH marR-type" evidence="1">
    <location>
        <begin position="1"/>
        <end position="116"/>
    </location>
</feature>
<feature type="DNA-binding region" description="H-T-H motif" evidence="1">
    <location>
        <begin position="26"/>
        <end position="49"/>
    </location>
</feature>
<feature type="region of interest" description="Solute-binding" evidence="1">
    <location>
        <begin position="163"/>
        <end position="492"/>
    </location>
</feature>
<name>SGRR_ECOL5</name>
<accession>Q0TLR9</accession>
<keyword id="KW-0010">Activator</keyword>
<keyword id="KW-0238">DNA-binding</keyword>
<keyword id="KW-0678">Repressor</keyword>
<keyword id="KW-0804">Transcription</keyword>
<keyword id="KW-0805">Transcription regulation</keyword>
<proteinExistence type="inferred from homology"/>
<comment type="function">
    <text evidence="1">Activates the small RNA gene sgrS under glucose-phosphate stress conditions as well as yfdZ. Represses its own transcription under both stress and non-stress conditions. Might act as a sensor of the intracellular accumulation of phosphoglucose by binding these molecules in its C-terminal solute-binding domain.</text>
</comment>
<protein>
    <recommendedName>
        <fullName evidence="1">HTH-type transcriptional regulator SgrR</fullName>
    </recommendedName>
</protein>
<sequence length="551" mass="64092">MPSARLQQQFIRLWQCCEGKSQETTLNELAALLSCSRRHMRTLLNTMQDRGWLTWEAEVGRGKRSRLTFLYTGLALQQQRAEDLLEQDRIDQLVQLVGDKATVRQMLVSHLGRSFRQGRHILRVLYYRPLRNLLPGSALRRSETHIARQIFSSLTRINEENGELEADIAHHWQQISPLHWRFFLRPGVHFHHGRELEMDDVIFSLKRINTLPLYSHIADIVSPTPWTLDIHLTQPDRWLPLLLGQVPAMILPREWETLSNFASHPIGTGPYAVIRNSTNQLKIQAFDDFFGYRALIDEVNVWVLPEIADEPAGGLMLKGPQGEEKEIESRLEEGCYYLLFDSRTHRGANQQVRDWVSYVLSPTNLVYFAEEQYQQLWFPAYGLLPRWHHARIIKSEKPAGLESLTLTFYQDHSEHRVIAGIMQQILASHQVTLEIKEISYDQWHEGEIESDIWLNSANFTLPLDFSLFAHLCEVPLLQHCIPIDWQADAARWRNGEMNLANWCQQLVASKAMVPLIHHWLIIQGQRSMRGLRMNTLGWFDFKSAWFAPPDP</sequence>
<gene>
    <name evidence="1" type="primary">sgrR</name>
    <name type="ordered locus">ECP_0072</name>
</gene>
<dbReference type="EMBL" id="CP000247">
    <property type="protein sequence ID" value="ABG68112.1"/>
    <property type="molecule type" value="Genomic_DNA"/>
</dbReference>
<dbReference type="RefSeq" id="WP_001298643.1">
    <property type="nucleotide sequence ID" value="NC_008253.1"/>
</dbReference>
<dbReference type="SMR" id="Q0TLR9"/>
<dbReference type="KEGG" id="ecp:ECP_0072"/>
<dbReference type="HOGENOM" id="CLU_017028_12_3_6"/>
<dbReference type="Proteomes" id="UP000009182">
    <property type="component" value="Chromosome"/>
</dbReference>
<dbReference type="GO" id="GO:0003677">
    <property type="term" value="F:DNA binding"/>
    <property type="evidence" value="ECO:0007669"/>
    <property type="project" value="UniProtKB-KW"/>
</dbReference>
<dbReference type="GO" id="GO:1904680">
    <property type="term" value="F:peptide transmembrane transporter activity"/>
    <property type="evidence" value="ECO:0007669"/>
    <property type="project" value="TreeGrafter"/>
</dbReference>
<dbReference type="GO" id="GO:0045892">
    <property type="term" value="P:negative regulation of DNA-templated transcription"/>
    <property type="evidence" value="ECO:0007669"/>
    <property type="project" value="UniProtKB-UniRule"/>
</dbReference>
<dbReference type="GO" id="GO:0015833">
    <property type="term" value="P:peptide transport"/>
    <property type="evidence" value="ECO:0007669"/>
    <property type="project" value="TreeGrafter"/>
</dbReference>
<dbReference type="GO" id="GO:0045893">
    <property type="term" value="P:positive regulation of DNA-templated transcription"/>
    <property type="evidence" value="ECO:0007669"/>
    <property type="project" value="UniProtKB-UniRule"/>
</dbReference>
<dbReference type="CDD" id="cd08507">
    <property type="entry name" value="PBP2_SgrR_like"/>
    <property type="match status" value="1"/>
</dbReference>
<dbReference type="FunFam" id="3.40.190.10:FF:000070">
    <property type="entry name" value="HTH-type transcriptional regulator SgrR"/>
    <property type="match status" value="1"/>
</dbReference>
<dbReference type="Gene3D" id="3.40.190.10">
    <property type="entry name" value="Periplasmic binding protein-like II"/>
    <property type="match status" value="1"/>
</dbReference>
<dbReference type="HAMAP" id="MF_01449">
    <property type="entry name" value="HTH_type_SgrR"/>
    <property type="match status" value="1"/>
</dbReference>
<dbReference type="InterPro" id="IPR039424">
    <property type="entry name" value="SBP_5"/>
</dbReference>
<dbReference type="InterPro" id="IPR000914">
    <property type="entry name" value="SBP_5_dom"/>
</dbReference>
<dbReference type="InterPro" id="IPR025370">
    <property type="entry name" value="SgrR_HTH_N"/>
</dbReference>
<dbReference type="InterPro" id="IPR023767">
    <property type="entry name" value="Tscrpt_reg_SgrR"/>
</dbReference>
<dbReference type="NCBIfam" id="NF010149">
    <property type="entry name" value="PRK13626.1"/>
    <property type="match status" value="1"/>
</dbReference>
<dbReference type="PANTHER" id="PTHR30290:SF72">
    <property type="entry name" value="HTH-TYPE TRANSCRIPTIONAL REGULATOR SGRR"/>
    <property type="match status" value="1"/>
</dbReference>
<dbReference type="PANTHER" id="PTHR30290">
    <property type="entry name" value="PERIPLASMIC BINDING COMPONENT OF ABC TRANSPORTER"/>
    <property type="match status" value="1"/>
</dbReference>
<dbReference type="Pfam" id="PF00496">
    <property type="entry name" value="SBP_bac_5"/>
    <property type="match status" value="1"/>
</dbReference>
<dbReference type="Pfam" id="PF12793">
    <property type="entry name" value="SgrR_N"/>
    <property type="match status" value="1"/>
</dbReference>
<dbReference type="SUPFAM" id="SSF53850">
    <property type="entry name" value="Periplasmic binding protein-like II"/>
    <property type="match status" value="1"/>
</dbReference>